<protein>
    <recommendedName>
        <fullName evidence="3">Conotoxin reg3h</fullName>
    </recommendedName>
    <alternativeName>
        <fullName evidence="3">Reg3.3</fullName>
        <shortName evidence="6">Rg3.3</shortName>
    </alternativeName>
</protein>
<name>CM3H_CONRE</name>
<organism>
    <name type="scientific">Conus regius</name>
    <name type="common">Crown cone</name>
    <dbReference type="NCBI Taxonomy" id="101314"/>
    <lineage>
        <taxon>Eukaryota</taxon>
        <taxon>Metazoa</taxon>
        <taxon>Spiralia</taxon>
        <taxon>Lophotrochozoa</taxon>
        <taxon>Mollusca</taxon>
        <taxon>Gastropoda</taxon>
        <taxon>Caenogastropoda</taxon>
        <taxon>Neogastropoda</taxon>
        <taxon>Conoidea</taxon>
        <taxon>Conidae</taxon>
        <taxon>Conus</taxon>
        <taxon>Stephanoconus</taxon>
    </lineage>
</organism>
<accession>A0A2I6EDL4</accession>
<sequence length="52" mass="5747">ALPLDGDQPADQPAERMQDISPELNPLFHPVKRGCCSPWNCIQLRACPCCPN</sequence>
<reference key="1">
    <citation type="journal article" date="2017" name="FEBS J.">
        <title>Structural plasticity of Mini-M conotoxins: expression of all mini-M subtypes by Conus regius.</title>
        <authorList>
            <person name="Franco A."/>
            <person name="Dovell S."/>
            <person name="Moller C."/>
            <person name="Grandal M."/>
            <person name="Clark E."/>
            <person name="Mari F."/>
        </authorList>
    </citation>
    <scope>NUCLEOTIDE SEQUENCE [MRNA]</scope>
    <scope>PROTEIN SEQUENCE OF 34-52</scope>
    <scope>MASS SPECTROMETRY</scope>
    <scope>SUBCELLULAR LOCATION</scope>
    <scope>HYDROXYLATION AT PRO-38; PRO-48 AND PRO-51</scope>
    <scope>AMIDATION AT ASN-52</scope>
    <source>
        <tissue>Venom</tissue>
        <tissue>Venom duct</tissue>
    </source>
</reference>
<feature type="signal peptide" evidence="4">
    <location>
        <begin position="1" status="less than"/>
        <end position="1"/>
    </location>
</feature>
<feature type="propeptide" id="PRO_0000444764" evidence="2">
    <location>
        <begin position="2"/>
        <end position="33"/>
    </location>
</feature>
<feature type="peptide" id="PRO_0000444765" description="Conotoxin reg3h" evidence="2">
    <location>
        <begin position="34"/>
        <end position="52"/>
    </location>
</feature>
<feature type="modified residue" description="4-hydroxyproline" evidence="2">
    <location>
        <position position="38"/>
    </location>
</feature>
<feature type="modified residue" description="4-hydroxyproline" evidence="2">
    <location>
        <position position="48"/>
    </location>
</feature>
<feature type="modified residue" description="4-hydroxyproline" evidence="2">
    <location>
        <position position="51"/>
    </location>
</feature>
<feature type="modified residue" description="Asparagine amide" evidence="2">
    <location>
        <position position="52"/>
    </location>
</feature>
<feature type="disulfide bond" evidence="1">
    <location>
        <begin position="35"/>
        <end position="49"/>
    </location>
</feature>
<feature type="disulfide bond" evidence="1">
    <location>
        <begin position="36"/>
        <end position="47"/>
    </location>
</feature>
<feature type="disulfide bond" evidence="1">
    <location>
        <begin position="41"/>
        <end position="50"/>
    </location>
</feature>
<feature type="non-terminal residue" evidence="6">
    <location>
        <position position="1"/>
    </location>
</feature>
<feature type="non-terminal residue" evidence="6">
    <location>
        <position position="52"/>
    </location>
</feature>
<comment type="subcellular location">
    <subcellularLocation>
        <location evidence="2">Secreted</location>
    </subcellularLocation>
</comment>
<comment type="tissue specificity">
    <text evidence="5">Expressed by the venom duct.</text>
</comment>
<comment type="domain">
    <text evidence="4">The cysteine framework is III (CC-C-C-CC). Classified in the M-1 branch, since 1 residue stands between the fourth and the fifth cysteine residues.</text>
</comment>
<comment type="mass spectrometry" mass="2111.8" method="MALDI" evidence="2"/>
<comment type="similarity">
    <text evidence="4">Belongs to the conotoxin M superfamily.</text>
</comment>
<dbReference type="EMBL" id="MF588937">
    <property type="protein sequence ID" value="AUJ88061.1"/>
    <property type="molecule type" value="mRNA"/>
</dbReference>
<dbReference type="GO" id="GO:0005576">
    <property type="term" value="C:extracellular region"/>
    <property type="evidence" value="ECO:0007669"/>
    <property type="project" value="UniProtKB-SubCell"/>
</dbReference>
<dbReference type="GO" id="GO:0090729">
    <property type="term" value="F:toxin activity"/>
    <property type="evidence" value="ECO:0007669"/>
    <property type="project" value="UniProtKB-KW"/>
</dbReference>
<evidence type="ECO:0000250" key="1">
    <source>
        <dbReference type="UniProtKB" id="Q5EHP3"/>
    </source>
</evidence>
<evidence type="ECO:0000269" key="2">
    <source>
    </source>
</evidence>
<evidence type="ECO:0000303" key="3">
    <source>
    </source>
</evidence>
<evidence type="ECO:0000305" key="4"/>
<evidence type="ECO:0000305" key="5">
    <source>
    </source>
</evidence>
<evidence type="ECO:0000312" key="6">
    <source>
        <dbReference type="EMBL" id="AUJ88061.1"/>
    </source>
</evidence>
<proteinExistence type="evidence at protein level"/>
<keyword id="KW-0027">Amidation</keyword>
<keyword id="KW-0165">Cleavage on pair of basic residues</keyword>
<keyword id="KW-0903">Direct protein sequencing</keyword>
<keyword id="KW-1015">Disulfide bond</keyword>
<keyword id="KW-0379">Hydroxylation</keyword>
<keyword id="KW-0964">Secreted</keyword>
<keyword id="KW-0732">Signal</keyword>
<keyword id="KW-0800">Toxin</keyword>